<protein>
    <recommendedName>
        <fullName evidence="1">Deoxyuridine 5'-triphosphate nucleotidohydrolase</fullName>
        <shortName evidence="1">dUTPase</shortName>
        <ecNumber evidence="1">3.6.1.23</ecNumber>
    </recommendedName>
    <alternativeName>
        <fullName evidence="1">dUTP pyrophosphatase</fullName>
    </alternativeName>
</protein>
<evidence type="ECO:0000250" key="1">
    <source>
        <dbReference type="UniProtKB" id="P33317"/>
    </source>
</evidence>
<evidence type="ECO:0000305" key="2"/>
<sequence>MTDAEQTIKNQKTQEAEQSLRVFLRSENATLPTRGSVLSAGYDIYASEEAVIPAQGQGLVGTDISVAVPIGTYGRVAPRSGLAVKHGISTGAGVIDADYRGEVKVVLFNHAQKDFTIQKGDRIAQLVLEKIVMADIKQITAEELDITARGEGGFGSTGKN</sequence>
<dbReference type="EC" id="3.6.1.23" evidence="1"/>
<dbReference type="EMBL" id="CR382136">
    <property type="protein sequence ID" value="CAG87304.1"/>
    <property type="molecule type" value="Genomic_DNA"/>
</dbReference>
<dbReference type="RefSeq" id="XP_459133.1">
    <property type="nucleotide sequence ID" value="XM_459133.1"/>
</dbReference>
<dbReference type="SMR" id="Q6BRN7"/>
<dbReference type="FunCoup" id="Q6BRN7">
    <property type="interactions" value="1226"/>
</dbReference>
<dbReference type="STRING" id="284592.Q6BRN7"/>
<dbReference type="GeneID" id="2901232"/>
<dbReference type="KEGG" id="dha:DEHA2D14982g"/>
<dbReference type="VEuPathDB" id="FungiDB:DEHA2D14982g"/>
<dbReference type="eggNOG" id="KOG3370">
    <property type="taxonomic scope" value="Eukaryota"/>
</dbReference>
<dbReference type="HOGENOM" id="CLU_068508_2_1_1"/>
<dbReference type="InParanoid" id="Q6BRN7"/>
<dbReference type="OMA" id="RSGMGHK"/>
<dbReference type="OrthoDB" id="419889at2759"/>
<dbReference type="UniPathway" id="UPA00610">
    <property type="reaction ID" value="UER00666"/>
</dbReference>
<dbReference type="Proteomes" id="UP000000599">
    <property type="component" value="Chromosome D"/>
</dbReference>
<dbReference type="GO" id="GO:0035870">
    <property type="term" value="F:dITP diphosphatase activity"/>
    <property type="evidence" value="ECO:0007669"/>
    <property type="project" value="EnsemblFungi"/>
</dbReference>
<dbReference type="GO" id="GO:0004170">
    <property type="term" value="F:dUTP diphosphatase activity"/>
    <property type="evidence" value="ECO:0007669"/>
    <property type="project" value="UniProtKB-EC"/>
</dbReference>
<dbReference type="GO" id="GO:0000287">
    <property type="term" value="F:magnesium ion binding"/>
    <property type="evidence" value="ECO:0007669"/>
    <property type="project" value="InterPro"/>
</dbReference>
<dbReference type="GO" id="GO:0035863">
    <property type="term" value="P:dITP catabolic process"/>
    <property type="evidence" value="ECO:0007669"/>
    <property type="project" value="EnsemblFungi"/>
</dbReference>
<dbReference type="GO" id="GO:0006226">
    <property type="term" value="P:dUMP biosynthetic process"/>
    <property type="evidence" value="ECO:0007669"/>
    <property type="project" value="UniProtKB-UniPathway"/>
</dbReference>
<dbReference type="GO" id="GO:0046081">
    <property type="term" value="P:dUTP catabolic process"/>
    <property type="evidence" value="ECO:0007669"/>
    <property type="project" value="EnsemblFungi"/>
</dbReference>
<dbReference type="CDD" id="cd07557">
    <property type="entry name" value="trimeric_dUTPase"/>
    <property type="match status" value="1"/>
</dbReference>
<dbReference type="FunFam" id="2.70.40.10:FF:000007">
    <property type="entry name" value="dUTP pyrophosphatase"/>
    <property type="match status" value="1"/>
</dbReference>
<dbReference type="Gene3D" id="2.70.40.10">
    <property type="match status" value="1"/>
</dbReference>
<dbReference type="InterPro" id="IPR008181">
    <property type="entry name" value="dUTPase"/>
</dbReference>
<dbReference type="InterPro" id="IPR029054">
    <property type="entry name" value="dUTPase-like"/>
</dbReference>
<dbReference type="InterPro" id="IPR036157">
    <property type="entry name" value="dUTPase-like_sf"/>
</dbReference>
<dbReference type="InterPro" id="IPR033704">
    <property type="entry name" value="dUTPase_trimeric"/>
</dbReference>
<dbReference type="NCBIfam" id="TIGR00576">
    <property type="entry name" value="dut"/>
    <property type="match status" value="1"/>
</dbReference>
<dbReference type="NCBIfam" id="NF001862">
    <property type="entry name" value="PRK00601.1"/>
    <property type="match status" value="1"/>
</dbReference>
<dbReference type="PANTHER" id="PTHR11241">
    <property type="entry name" value="DEOXYURIDINE 5'-TRIPHOSPHATE NUCLEOTIDOHYDROLASE"/>
    <property type="match status" value="1"/>
</dbReference>
<dbReference type="PANTHER" id="PTHR11241:SF0">
    <property type="entry name" value="DEOXYURIDINE 5'-TRIPHOSPHATE NUCLEOTIDOHYDROLASE"/>
    <property type="match status" value="1"/>
</dbReference>
<dbReference type="Pfam" id="PF00692">
    <property type="entry name" value="dUTPase"/>
    <property type="match status" value="1"/>
</dbReference>
<dbReference type="SUPFAM" id="SSF51283">
    <property type="entry name" value="dUTPase-like"/>
    <property type="match status" value="1"/>
</dbReference>
<feature type="chain" id="PRO_0000182932" description="Deoxyuridine 5'-triphosphate nucleotidohydrolase">
    <location>
        <begin position="1"/>
        <end position="160"/>
    </location>
</feature>
<feature type="binding site" evidence="1">
    <location>
        <position position="80"/>
    </location>
    <ligand>
        <name>dUMP</name>
        <dbReference type="ChEBI" id="CHEBI:246422"/>
    </ligand>
</feature>
<feature type="binding site" evidence="1">
    <location>
        <position position="93"/>
    </location>
    <ligand>
        <name>dUMP</name>
        <dbReference type="ChEBI" id="CHEBI:246422"/>
    </ligand>
</feature>
<feature type="binding site" evidence="1">
    <location>
        <position position="96"/>
    </location>
    <ligand>
        <name>dUMP</name>
        <dbReference type="ChEBI" id="CHEBI:246422"/>
    </ligand>
</feature>
<feature type="binding site" evidence="1">
    <location>
        <position position="99"/>
    </location>
    <ligand>
        <name>dUMP</name>
        <dbReference type="ChEBI" id="CHEBI:246422"/>
    </ligand>
</feature>
<feature type="binding site" evidence="1">
    <location>
        <position position="104"/>
    </location>
    <ligand>
        <name>dUMP</name>
        <dbReference type="ChEBI" id="CHEBI:246422"/>
    </ligand>
</feature>
<feature type="binding site" evidence="1">
    <location>
        <position position="149"/>
    </location>
    <ligand>
        <name>dUMP</name>
        <dbReference type="ChEBI" id="CHEBI:246422"/>
    </ligand>
</feature>
<feature type="binding site" evidence="1">
    <location>
        <position position="154"/>
    </location>
    <ligand>
        <name>dUMP</name>
        <dbReference type="ChEBI" id="CHEBI:246422"/>
    </ligand>
</feature>
<feature type="binding site" evidence="1">
    <location>
        <position position="155"/>
    </location>
    <ligand>
        <name>dUMP</name>
        <dbReference type="ChEBI" id="CHEBI:246422"/>
    </ligand>
</feature>
<name>DUT_DEBHA</name>
<accession>Q6BRN7</accession>
<reference key="1">
    <citation type="journal article" date="2004" name="Nature">
        <title>Genome evolution in yeasts.</title>
        <authorList>
            <person name="Dujon B."/>
            <person name="Sherman D."/>
            <person name="Fischer G."/>
            <person name="Durrens P."/>
            <person name="Casaregola S."/>
            <person name="Lafontaine I."/>
            <person name="de Montigny J."/>
            <person name="Marck C."/>
            <person name="Neuveglise C."/>
            <person name="Talla E."/>
            <person name="Goffard N."/>
            <person name="Frangeul L."/>
            <person name="Aigle M."/>
            <person name="Anthouard V."/>
            <person name="Babour A."/>
            <person name="Barbe V."/>
            <person name="Barnay S."/>
            <person name="Blanchin S."/>
            <person name="Beckerich J.-M."/>
            <person name="Beyne E."/>
            <person name="Bleykasten C."/>
            <person name="Boisrame A."/>
            <person name="Boyer J."/>
            <person name="Cattolico L."/>
            <person name="Confanioleri F."/>
            <person name="de Daruvar A."/>
            <person name="Despons L."/>
            <person name="Fabre E."/>
            <person name="Fairhead C."/>
            <person name="Ferry-Dumazet H."/>
            <person name="Groppi A."/>
            <person name="Hantraye F."/>
            <person name="Hennequin C."/>
            <person name="Jauniaux N."/>
            <person name="Joyet P."/>
            <person name="Kachouri R."/>
            <person name="Kerrest A."/>
            <person name="Koszul R."/>
            <person name="Lemaire M."/>
            <person name="Lesur I."/>
            <person name="Ma L."/>
            <person name="Muller H."/>
            <person name="Nicaud J.-M."/>
            <person name="Nikolski M."/>
            <person name="Oztas S."/>
            <person name="Ozier-Kalogeropoulos O."/>
            <person name="Pellenz S."/>
            <person name="Potier S."/>
            <person name="Richard G.-F."/>
            <person name="Straub M.-L."/>
            <person name="Suleau A."/>
            <person name="Swennen D."/>
            <person name="Tekaia F."/>
            <person name="Wesolowski-Louvel M."/>
            <person name="Westhof E."/>
            <person name="Wirth B."/>
            <person name="Zeniou-Meyer M."/>
            <person name="Zivanovic Y."/>
            <person name="Bolotin-Fukuhara M."/>
            <person name="Thierry A."/>
            <person name="Bouchier C."/>
            <person name="Caudron B."/>
            <person name="Scarpelli C."/>
            <person name="Gaillardin C."/>
            <person name="Weissenbach J."/>
            <person name="Wincker P."/>
            <person name="Souciet J.-L."/>
        </authorList>
    </citation>
    <scope>NUCLEOTIDE SEQUENCE [LARGE SCALE GENOMIC DNA]</scope>
    <source>
        <strain>ATCC 36239 / CBS 767 / BCRC 21394 / JCM 1990 / NBRC 0083 / IGC 2968</strain>
    </source>
</reference>
<organism>
    <name type="scientific">Debaryomyces hansenii (strain ATCC 36239 / CBS 767 / BCRC 21394 / JCM 1990 / NBRC 0083 / IGC 2968)</name>
    <name type="common">Yeast</name>
    <name type="synonym">Torulaspora hansenii</name>
    <dbReference type="NCBI Taxonomy" id="284592"/>
    <lineage>
        <taxon>Eukaryota</taxon>
        <taxon>Fungi</taxon>
        <taxon>Dikarya</taxon>
        <taxon>Ascomycota</taxon>
        <taxon>Saccharomycotina</taxon>
        <taxon>Pichiomycetes</taxon>
        <taxon>Debaryomycetaceae</taxon>
        <taxon>Debaryomyces</taxon>
    </lineage>
</organism>
<comment type="function">
    <text evidence="1">Involved in nucleotide metabolism via production of dUMP, the immediate precursor of thymidine nucleotides, and decreases the intracellular concentration of dUTP so that uracil cannot be incorporated into DNA.</text>
</comment>
<comment type="catalytic activity">
    <reaction evidence="1">
        <text>dUTP + H2O = dUMP + diphosphate + H(+)</text>
        <dbReference type="Rhea" id="RHEA:10248"/>
        <dbReference type="ChEBI" id="CHEBI:15377"/>
        <dbReference type="ChEBI" id="CHEBI:15378"/>
        <dbReference type="ChEBI" id="CHEBI:33019"/>
        <dbReference type="ChEBI" id="CHEBI:61555"/>
        <dbReference type="ChEBI" id="CHEBI:246422"/>
        <dbReference type="EC" id="3.6.1.23"/>
    </reaction>
    <physiologicalReaction direction="left-to-right" evidence="1">
        <dbReference type="Rhea" id="RHEA:10249"/>
    </physiologicalReaction>
</comment>
<comment type="cofactor">
    <cofactor evidence="1">
        <name>Mg(2+)</name>
        <dbReference type="ChEBI" id="CHEBI:18420"/>
    </cofactor>
</comment>
<comment type="pathway">
    <text>Pyrimidine metabolism; dUMP biosynthesis; dUMP from dCTP (dUTP route): step 2/2.</text>
</comment>
<comment type="subunit">
    <text evidence="1">Homotrimer.</text>
</comment>
<comment type="similarity">
    <text evidence="2">Belongs to the dUTPase family.</text>
</comment>
<keyword id="KW-0378">Hydrolase</keyword>
<keyword id="KW-0460">Magnesium</keyword>
<keyword id="KW-0479">Metal-binding</keyword>
<keyword id="KW-0546">Nucleotide metabolism</keyword>
<keyword id="KW-1185">Reference proteome</keyword>
<proteinExistence type="inferred from homology"/>
<gene>
    <name type="primary">DUT1</name>
    <name type="ordered locus">DEHA2D14982g</name>
</gene>